<sequence>MPKIGMQSIRKQQLIQATLAVINEVGMQDASIALIARKAGVSNGIISHYFRDKNGLLEAAMRHIQYQLGFAVAMRLRILSDAEPKLRIQAIVDGNFDTSQTSETAMKTWLAFWASSMHQPNLHRLQKVNDRRLYSNLCYEFGRALTKDKARLAAKGLAALIDGLWLRSALSEEPFSLAEAKKITDEYIDMQLNLCQDKQT</sequence>
<dbReference type="EMBL" id="AM942759">
    <property type="protein sequence ID" value="CAR43066.1"/>
    <property type="molecule type" value="Genomic_DNA"/>
</dbReference>
<dbReference type="RefSeq" id="WP_004248206.1">
    <property type="nucleotide sequence ID" value="NC_010554.1"/>
</dbReference>
<dbReference type="SMR" id="B4EX96"/>
<dbReference type="EnsemblBacteria" id="CAR43066">
    <property type="protein sequence ID" value="CAR43066"/>
    <property type="gene ID" value="PMI1461"/>
</dbReference>
<dbReference type="GeneID" id="6801235"/>
<dbReference type="KEGG" id="pmr:PMI1461"/>
<dbReference type="eggNOG" id="COG1309">
    <property type="taxonomic scope" value="Bacteria"/>
</dbReference>
<dbReference type="HOGENOM" id="CLU_069356_15_4_6"/>
<dbReference type="UniPathway" id="UPA00529"/>
<dbReference type="Proteomes" id="UP000008319">
    <property type="component" value="Chromosome"/>
</dbReference>
<dbReference type="GO" id="GO:0003700">
    <property type="term" value="F:DNA-binding transcription factor activity"/>
    <property type="evidence" value="ECO:0007669"/>
    <property type="project" value="UniProtKB-UniRule"/>
</dbReference>
<dbReference type="GO" id="GO:0000976">
    <property type="term" value="F:transcription cis-regulatory region binding"/>
    <property type="evidence" value="ECO:0007669"/>
    <property type="project" value="TreeGrafter"/>
</dbReference>
<dbReference type="GO" id="GO:0019285">
    <property type="term" value="P:glycine betaine biosynthetic process from choline"/>
    <property type="evidence" value="ECO:0007669"/>
    <property type="project" value="UniProtKB-UniRule"/>
</dbReference>
<dbReference type="GO" id="GO:0045892">
    <property type="term" value="P:negative regulation of DNA-templated transcription"/>
    <property type="evidence" value="ECO:0007669"/>
    <property type="project" value="UniProtKB-UniRule"/>
</dbReference>
<dbReference type="Gene3D" id="1.10.357.10">
    <property type="entry name" value="Tetracycline Repressor, domain 2"/>
    <property type="match status" value="1"/>
</dbReference>
<dbReference type="HAMAP" id="MF_00768">
    <property type="entry name" value="HTH_type_BetI"/>
    <property type="match status" value="1"/>
</dbReference>
<dbReference type="InterPro" id="IPR039538">
    <property type="entry name" value="BetI_C"/>
</dbReference>
<dbReference type="InterPro" id="IPR023772">
    <property type="entry name" value="DNA-bd_HTH_TetR-type_CS"/>
</dbReference>
<dbReference type="InterPro" id="IPR009057">
    <property type="entry name" value="Homeodomain-like_sf"/>
</dbReference>
<dbReference type="InterPro" id="IPR050109">
    <property type="entry name" value="HTH-type_TetR-like_transc_reg"/>
</dbReference>
<dbReference type="InterPro" id="IPR001647">
    <property type="entry name" value="HTH_TetR"/>
</dbReference>
<dbReference type="InterPro" id="IPR036271">
    <property type="entry name" value="Tet_transcr_reg_TetR-rel_C_sf"/>
</dbReference>
<dbReference type="InterPro" id="IPR017757">
    <property type="entry name" value="Tscrpt_rep_BetI"/>
</dbReference>
<dbReference type="NCBIfam" id="TIGR03384">
    <property type="entry name" value="betaine_BetI"/>
    <property type="match status" value="1"/>
</dbReference>
<dbReference type="NCBIfam" id="NF001978">
    <property type="entry name" value="PRK00767.1"/>
    <property type="match status" value="1"/>
</dbReference>
<dbReference type="PANTHER" id="PTHR30055:SF234">
    <property type="entry name" value="HTH-TYPE TRANSCRIPTIONAL REGULATOR BETI"/>
    <property type="match status" value="1"/>
</dbReference>
<dbReference type="PANTHER" id="PTHR30055">
    <property type="entry name" value="HTH-TYPE TRANSCRIPTIONAL REGULATOR RUTR"/>
    <property type="match status" value="1"/>
</dbReference>
<dbReference type="Pfam" id="PF13977">
    <property type="entry name" value="TetR_C_6"/>
    <property type="match status" value="1"/>
</dbReference>
<dbReference type="Pfam" id="PF00440">
    <property type="entry name" value="TetR_N"/>
    <property type="match status" value="1"/>
</dbReference>
<dbReference type="PRINTS" id="PR00455">
    <property type="entry name" value="HTHTETR"/>
</dbReference>
<dbReference type="SUPFAM" id="SSF46689">
    <property type="entry name" value="Homeodomain-like"/>
    <property type="match status" value="1"/>
</dbReference>
<dbReference type="SUPFAM" id="SSF48498">
    <property type="entry name" value="Tetracyclin repressor-like, C-terminal domain"/>
    <property type="match status" value="1"/>
</dbReference>
<dbReference type="PROSITE" id="PS01081">
    <property type="entry name" value="HTH_TETR_1"/>
    <property type="match status" value="1"/>
</dbReference>
<dbReference type="PROSITE" id="PS50977">
    <property type="entry name" value="HTH_TETR_2"/>
    <property type="match status" value="1"/>
</dbReference>
<organism>
    <name type="scientific">Proteus mirabilis (strain HI4320)</name>
    <dbReference type="NCBI Taxonomy" id="529507"/>
    <lineage>
        <taxon>Bacteria</taxon>
        <taxon>Pseudomonadati</taxon>
        <taxon>Pseudomonadota</taxon>
        <taxon>Gammaproteobacteria</taxon>
        <taxon>Enterobacterales</taxon>
        <taxon>Morganellaceae</taxon>
        <taxon>Proteus</taxon>
    </lineage>
</organism>
<keyword id="KW-0238">DNA-binding</keyword>
<keyword id="KW-1185">Reference proteome</keyword>
<keyword id="KW-0678">Repressor</keyword>
<keyword id="KW-0804">Transcription</keyword>
<keyword id="KW-0805">Transcription regulation</keyword>
<proteinExistence type="inferred from homology"/>
<accession>B4EX96</accession>
<reference key="1">
    <citation type="journal article" date="2008" name="J. Bacteriol.">
        <title>Complete genome sequence of uropathogenic Proteus mirabilis, a master of both adherence and motility.</title>
        <authorList>
            <person name="Pearson M.M."/>
            <person name="Sebaihia M."/>
            <person name="Churcher C."/>
            <person name="Quail M.A."/>
            <person name="Seshasayee A.S."/>
            <person name="Luscombe N.M."/>
            <person name="Abdellah Z."/>
            <person name="Arrosmith C."/>
            <person name="Atkin B."/>
            <person name="Chillingworth T."/>
            <person name="Hauser H."/>
            <person name="Jagels K."/>
            <person name="Moule S."/>
            <person name="Mungall K."/>
            <person name="Norbertczak H."/>
            <person name="Rabbinowitsch E."/>
            <person name="Walker D."/>
            <person name="Whithead S."/>
            <person name="Thomson N.R."/>
            <person name="Rather P.N."/>
            <person name="Parkhill J."/>
            <person name="Mobley H.L.T."/>
        </authorList>
    </citation>
    <scope>NUCLEOTIDE SEQUENCE [LARGE SCALE GENOMIC DNA]</scope>
    <source>
        <strain>HI4320</strain>
    </source>
</reference>
<feature type="chain" id="PRO_1000190487" description="HTH-type transcriptional regulator BetI">
    <location>
        <begin position="1"/>
        <end position="200"/>
    </location>
</feature>
<feature type="domain" description="HTH tetR-type" evidence="2">
    <location>
        <begin position="8"/>
        <end position="68"/>
    </location>
</feature>
<feature type="DNA-binding region" description="H-T-H motif" evidence="2">
    <location>
        <begin position="31"/>
        <end position="50"/>
    </location>
</feature>
<name>BETI_PROMH</name>
<comment type="function">
    <text evidence="1">Repressor involved in the biosynthesis of the osmoprotectant glycine betaine. It represses transcription of the choline transporter BetT and the genes of BetAB involved in the synthesis of glycine betaine (By similarity).</text>
</comment>
<comment type="pathway">
    <text>Amine and polyamine biosynthesis; betaine biosynthesis via choline pathway [regulation].</text>
</comment>
<evidence type="ECO:0000250" key="1"/>
<evidence type="ECO:0000255" key="2">
    <source>
        <dbReference type="HAMAP-Rule" id="MF_00768"/>
    </source>
</evidence>
<protein>
    <recommendedName>
        <fullName evidence="2">HTH-type transcriptional regulator BetI</fullName>
    </recommendedName>
</protein>
<gene>
    <name evidence="2" type="primary">betI</name>
    <name type="ordered locus">PMI1461</name>
</gene>